<evidence type="ECO:0000250" key="1"/>
<evidence type="ECO:0000255" key="2">
    <source>
        <dbReference type="HAMAP-Rule" id="MF_01210"/>
    </source>
</evidence>
<evidence type="ECO:0000305" key="3"/>
<accession>Q8FLB0</accession>
<reference key="1">
    <citation type="journal article" date="2002" name="Proc. Natl. Acad. Sci. U.S.A.">
        <title>Extensive mosaic structure revealed by the complete genome sequence of uropathogenic Escherichia coli.</title>
        <authorList>
            <person name="Welch R.A."/>
            <person name="Burland V."/>
            <person name="Plunkett G. III"/>
            <person name="Redford P."/>
            <person name="Roesch P."/>
            <person name="Rasko D."/>
            <person name="Buckles E.L."/>
            <person name="Liou S.-R."/>
            <person name="Boutin A."/>
            <person name="Hackett J."/>
            <person name="Stroud D."/>
            <person name="Mayhew G.F."/>
            <person name="Rose D.J."/>
            <person name="Zhou S."/>
            <person name="Schwartz D.C."/>
            <person name="Perna N.T."/>
            <person name="Mobley H.L.T."/>
            <person name="Donnenberg M.S."/>
            <person name="Blattner F.R."/>
        </authorList>
    </citation>
    <scope>NUCLEOTIDE SEQUENCE [LARGE SCALE GENOMIC DNA]</scope>
    <source>
        <strain>CFT073 / ATCC 700928 / UPEC</strain>
    </source>
</reference>
<gene>
    <name evidence="2" type="primary">carB</name>
    <name type="ordered locus">c0041</name>
</gene>
<proteinExistence type="inferred from homology"/>
<dbReference type="EC" id="6.3.4.16" evidence="2"/>
<dbReference type="EC" id="6.3.5.5" evidence="2"/>
<dbReference type="EMBL" id="AE014075">
    <property type="protein sequence ID" value="AAN78539.1"/>
    <property type="molecule type" value="Genomic_DNA"/>
</dbReference>
<dbReference type="RefSeq" id="WP_001126335.1">
    <property type="nucleotide sequence ID" value="NZ_CP051263.1"/>
</dbReference>
<dbReference type="SMR" id="Q8FLB0"/>
<dbReference type="STRING" id="199310.c0041"/>
<dbReference type="KEGG" id="ecc:c0041"/>
<dbReference type="eggNOG" id="COG0458">
    <property type="taxonomic scope" value="Bacteria"/>
</dbReference>
<dbReference type="HOGENOM" id="CLU_000513_1_0_6"/>
<dbReference type="BioCyc" id="ECOL199310:C0041-MONOMER"/>
<dbReference type="UniPathway" id="UPA00068">
    <property type="reaction ID" value="UER00171"/>
</dbReference>
<dbReference type="UniPathway" id="UPA00070">
    <property type="reaction ID" value="UER00115"/>
</dbReference>
<dbReference type="Proteomes" id="UP000001410">
    <property type="component" value="Chromosome"/>
</dbReference>
<dbReference type="GO" id="GO:0005737">
    <property type="term" value="C:cytoplasm"/>
    <property type="evidence" value="ECO:0007669"/>
    <property type="project" value="TreeGrafter"/>
</dbReference>
<dbReference type="GO" id="GO:0005524">
    <property type="term" value="F:ATP binding"/>
    <property type="evidence" value="ECO:0007669"/>
    <property type="project" value="UniProtKB-UniRule"/>
</dbReference>
<dbReference type="GO" id="GO:0004087">
    <property type="term" value="F:carbamoyl-phosphate synthase (ammonia) activity"/>
    <property type="evidence" value="ECO:0007669"/>
    <property type="project" value="RHEA"/>
</dbReference>
<dbReference type="GO" id="GO:0004088">
    <property type="term" value="F:carbamoyl-phosphate synthase (glutamine-hydrolyzing) activity"/>
    <property type="evidence" value="ECO:0007669"/>
    <property type="project" value="UniProtKB-UniRule"/>
</dbReference>
<dbReference type="GO" id="GO:0046872">
    <property type="term" value="F:metal ion binding"/>
    <property type="evidence" value="ECO:0007669"/>
    <property type="project" value="UniProtKB-KW"/>
</dbReference>
<dbReference type="GO" id="GO:0044205">
    <property type="term" value="P:'de novo' UMP biosynthetic process"/>
    <property type="evidence" value="ECO:0007669"/>
    <property type="project" value="UniProtKB-UniRule"/>
</dbReference>
<dbReference type="GO" id="GO:0006541">
    <property type="term" value="P:glutamine metabolic process"/>
    <property type="evidence" value="ECO:0007669"/>
    <property type="project" value="TreeGrafter"/>
</dbReference>
<dbReference type="GO" id="GO:0006526">
    <property type="term" value="P:L-arginine biosynthetic process"/>
    <property type="evidence" value="ECO:0007669"/>
    <property type="project" value="UniProtKB-UniRule"/>
</dbReference>
<dbReference type="CDD" id="cd01424">
    <property type="entry name" value="MGS_CPS_II"/>
    <property type="match status" value="1"/>
</dbReference>
<dbReference type="FunFam" id="1.10.1030.10:FF:000002">
    <property type="entry name" value="Carbamoyl-phosphate synthase large chain"/>
    <property type="match status" value="1"/>
</dbReference>
<dbReference type="FunFam" id="3.30.1490.20:FF:000001">
    <property type="entry name" value="Carbamoyl-phosphate synthase large chain"/>
    <property type="match status" value="1"/>
</dbReference>
<dbReference type="FunFam" id="3.30.470.20:FF:000007">
    <property type="entry name" value="Carbamoyl-phosphate synthase large chain"/>
    <property type="match status" value="1"/>
</dbReference>
<dbReference type="FunFam" id="3.30.470.20:FF:000013">
    <property type="entry name" value="Carbamoyl-phosphate synthase large chain"/>
    <property type="match status" value="1"/>
</dbReference>
<dbReference type="FunFam" id="3.40.50.1380:FF:000004">
    <property type="entry name" value="Carbamoyl-phosphate synthase large chain"/>
    <property type="match status" value="1"/>
</dbReference>
<dbReference type="FunFam" id="3.40.50.20:FF:000001">
    <property type="entry name" value="Carbamoyl-phosphate synthase large chain"/>
    <property type="match status" value="1"/>
</dbReference>
<dbReference type="FunFam" id="3.40.50.20:FF:000003">
    <property type="entry name" value="Carbamoyl-phosphate synthase large chain"/>
    <property type="match status" value="1"/>
</dbReference>
<dbReference type="Gene3D" id="3.40.50.20">
    <property type="match status" value="2"/>
</dbReference>
<dbReference type="Gene3D" id="3.30.470.20">
    <property type="entry name" value="ATP-grasp fold, B domain"/>
    <property type="match status" value="2"/>
</dbReference>
<dbReference type="Gene3D" id="1.10.1030.10">
    <property type="entry name" value="Carbamoyl-phosphate synthetase, large subunit oligomerisation domain"/>
    <property type="match status" value="1"/>
</dbReference>
<dbReference type="Gene3D" id="3.40.50.1380">
    <property type="entry name" value="Methylglyoxal synthase-like domain"/>
    <property type="match status" value="1"/>
</dbReference>
<dbReference type="HAMAP" id="MF_01210_A">
    <property type="entry name" value="CPSase_L_chain_A"/>
    <property type="match status" value="1"/>
</dbReference>
<dbReference type="HAMAP" id="MF_01210_B">
    <property type="entry name" value="CPSase_L_chain_B"/>
    <property type="match status" value="1"/>
</dbReference>
<dbReference type="InterPro" id="IPR011761">
    <property type="entry name" value="ATP-grasp"/>
</dbReference>
<dbReference type="InterPro" id="IPR006275">
    <property type="entry name" value="CarbamoylP_synth_lsu"/>
</dbReference>
<dbReference type="InterPro" id="IPR005480">
    <property type="entry name" value="CarbamoylP_synth_lsu_oligo"/>
</dbReference>
<dbReference type="InterPro" id="IPR036897">
    <property type="entry name" value="CarbamoylP_synth_lsu_oligo_sf"/>
</dbReference>
<dbReference type="InterPro" id="IPR005479">
    <property type="entry name" value="CbamoylP_synth_lsu-like_ATP-bd"/>
</dbReference>
<dbReference type="InterPro" id="IPR005483">
    <property type="entry name" value="CbamoylP_synth_lsu_CPSase_dom"/>
</dbReference>
<dbReference type="InterPro" id="IPR011607">
    <property type="entry name" value="MGS-like_dom"/>
</dbReference>
<dbReference type="InterPro" id="IPR036914">
    <property type="entry name" value="MGS-like_dom_sf"/>
</dbReference>
<dbReference type="InterPro" id="IPR033937">
    <property type="entry name" value="MGS_CPS_CarB"/>
</dbReference>
<dbReference type="InterPro" id="IPR016185">
    <property type="entry name" value="PreATP-grasp_dom_sf"/>
</dbReference>
<dbReference type="NCBIfam" id="TIGR01369">
    <property type="entry name" value="CPSaseII_lrg"/>
    <property type="match status" value="1"/>
</dbReference>
<dbReference type="NCBIfam" id="NF003671">
    <property type="entry name" value="PRK05294.1"/>
    <property type="match status" value="1"/>
</dbReference>
<dbReference type="NCBIfam" id="NF009455">
    <property type="entry name" value="PRK12815.1"/>
    <property type="match status" value="1"/>
</dbReference>
<dbReference type="PANTHER" id="PTHR11405:SF53">
    <property type="entry name" value="CARBAMOYL-PHOSPHATE SYNTHASE [AMMONIA], MITOCHONDRIAL"/>
    <property type="match status" value="1"/>
</dbReference>
<dbReference type="PANTHER" id="PTHR11405">
    <property type="entry name" value="CARBAMOYLTRANSFERASE FAMILY MEMBER"/>
    <property type="match status" value="1"/>
</dbReference>
<dbReference type="Pfam" id="PF02786">
    <property type="entry name" value="CPSase_L_D2"/>
    <property type="match status" value="2"/>
</dbReference>
<dbReference type="Pfam" id="PF02787">
    <property type="entry name" value="CPSase_L_D3"/>
    <property type="match status" value="1"/>
</dbReference>
<dbReference type="Pfam" id="PF02142">
    <property type="entry name" value="MGS"/>
    <property type="match status" value="1"/>
</dbReference>
<dbReference type="PRINTS" id="PR00098">
    <property type="entry name" value="CPSASE"/>
</dbReference>
<dbReference type="SMART" id="SM01096">
    <property type="entry name" value="CPSase_L_D3"/>
    <property type="match status" value="1"/>
</dbReference>
<dbReference type="SMART" id="SM00851">
    <property type="entry name" value="MGS"/>
    <property type="match status" value="1"/>
</dbReference>
<dbReference type="SUPFAM" id="SSF48108">
    <property type="entry name" value="Carbamoyl phosphate synthetase, large subunit connection domain"/>
    <property type="match status" value="1"/>
</dbReference>
<dbReference type="SUPFAM" id="SSF56059">
    <property type="entry name" value="Glutathione synthetase ATP-binding domain-like"/>
    <property type="match status" value="2"/>
</dbReference>
<dbReference type="SUPFAM" id="SSF52335">
    <property type="entry name" value="Methylglyoxal synthase-like"/>
    <property type="match status" value="1"/>
</dbReference>
<dbReference type="SUPFAM" id="SSF52440">
    <property type="entry name" value="PreATP-grasp domain"/>
    <property type="match status" value="2"/>
</dbReference>
<dbReference type="PROSITE" id="PS50975">
    <property type="entry name" value="ATP_GRASP"/>
    <property type="match status" value="2"/>
</dbReference>
<dbReference type="PROSITE" id="PS00866">
    <property type="entry name" value="CPSASE_1"/>
    <property type="match status" value="2"/>
</dbReference>
<dbReference type="PROSITE" id="PS00867">
    <property type="entry name" value="CPSASE_2"/>
    <property type="match status" value="2"/>
</dbReference>
<dbReference type="PROSITE" id="PS51855">
    <property type="entry name" value="MGS"/>
    <property type="match status" value="1"/>
</dbReference>
<sequence>MPKRTDIKSILILGAGPIVIGQACEFDYSGAQACKALREEGYRVILVNSNPATIMTDPEMADATYIEPIHWEVVRKIIEKERPDAVLPTMGGQTALNCALELERQGVLEEFGVTMIGATADAIDKAEDRRRFDVAMKKIGLETARSGIAHSMEEALAVAAEVGFPCIIRPSFTMGGSGGGIAYNREEFEEICARGLDLSPTKELLIDESLIGWKEYEMEVVRDKNDNCIIVCSIENFDAMGIHTGDSITVAPAQTLTDKEYQIMRNASMAVLREIGVETGGSNVQFAVNPKNGRLIVIEMNPRVSRSSALASKATGFPIAKVAAKLAVGYTLDELMNDITGGRTPASFEPSIDYVVTKIPRFNFEKFAGANDRLTTQMKSVGEVMAIGRTQQESLQKALRGLEVGATGFDPKVSLDDPEALTKIRRELKDAGAERIWYIADAFRAGLSVDGVFNLTNIDRWFLVQIEELVRLEEKVAEVGITGLHAEFLRQLKRKGFADARLAKLAGVREAEIRKLRDQYDLHPVYKRVDTCAAEFATDTAYMYSTYEEECEANPSTDREKIMVLGGGPNRIGQGIEFDYCCVHASLALREDGYETIMVNCNPETVSTDYDTSDRLYFEPVTLEDVLEIVRIEKPKGVIVQYGGQTPLKLARALEAAGVPVIGTSPDAIDRAEDRERFQHAVERLKLKQPANATVTTIEMAVEKAKEIGYPLVVRPSYVLGGRAMEIVYDEADLRRYFQTAVSVSNDAPVLLDHFLDDAVEVDVDAICDGEVVLIGGIMEHIEQAGVHSGDSACSLPAYTLSQEIQDVMRQQVQKLAFELQVRGLMNVQFAVKNNEVYLIEVNPRAARTVPFVSKATGVPLAKVAARVMAGKSLAEQGVTKEVIPPYYSVKEVVLPFNKFPGVDPLLGPEMRSTGEVMGVGRTFAEAFAKAQLGSNSTMKKHGRALLSVREGDKERVVDLAAKLLKQGFELDATHGTAIVLGEAGINPRLVNKVHEGRPHIQDRIKNGEYTYIINTTSGRRAIEDSRVIRRSALQYKVHYDTTLNGGFATAMALNADATEKVISVQEMHAQIK</sequence>
<keyword id="KW-0028">Amino-acid biosynthesis</keyword>
<keyword id="KW-0055">Arginine biosynthesis</keyword>
<keyword id="KW-0067">ATP-binding</keyword>
<keyword id="KW-0436">Ligase</keyword>
<keyword id="KW-0460">Magnesium</keyword>
<keyword id="KW-0464">Manganese</keyword>
<keyword id="KW-0479">Metal-binding</keyword>
<keyword id="KW-0547">Nucleotide-binding</keyword>
<keyword id="KW-0665">Pyrimidine biosynthesis</keyword>
<keyword id="KW-1185">Reference proteome</keyword>
<keyword id="KW-0677">Repeat</keyword>
<organism>
    <name type="scientific">Escherichia coli O6:H1 (strain CFT073 / ATCC 700928 / UPEC)</name>
    <dbReference type="NCBI Taxonomy" id="199310"/>
    <lineage>
        <taxon>Bacteria</taxon>
        <taxon>Pseudomonadati</taxon>
        <taxon>Pseudomonadota</taxon>
        <taxon>Gammaproteobacteria</taxon>
        <taxon>Enterobacterales</taxon>
        <taxon>Enterobacteriaceae</taxon>
        <taxon>Escherichia</taxon>
    </lineage>
</organism>
<protein>
    <recommendedName>
        <fullName evidence="2">Carbamoyl phosphate synthase large chain</fullName>
        <ecNumber evidence="2">6.3.4.16</ecNumber>
        <ecNumber evidence="2">6.3.5.5</ecNumber>
    </recommendedName>
    <alternativeName>
        <fullName evidence="2">Carbamoyl phosphate synthetase ammonia chain</fullName>
    </alternativeName>
</protein>
<feature type="initiator methionine" description="Removed" evidence="1">
    <location>
        <position position="1"/>
    </location>
</feature>
<feature type="chain" id="PRO_0000145005" description="Carbamoyl phosphate synthase large chain">
    <location>
        <begin position="2"/>
        <end position="1073"/>
    </location>
</feature>
<feature type="domain" description="ATP-grasp 1" evidence="2">
    <location>
        <begin position="133"/>
        <end position="328"/>
    </location>
</feature>
<feature type="domain" description="ATP-grasp 2" evidence="2">
    <location>
        <begin position="679"/>
        <end position="870"/>
    </location>
</feature>
<feature type="domain" description="MGS-like" evidence="2">
    <location>
        <begin position="937"/>
        <end position="1073"/>
    </location>
</feature>
<feature type="region of interest" description="Carboxyphosphate synthetic domain" evidence="2">
    <location>
        <begin position="2"/>
        <end position="403"/>
    </location>
</feature>
<feature type="region of interest" description="Oligomerization domain" evidence="2">
    <location>
        <begin position="404"/>
        <end position="553"/>
    </location>
</feature>
<feature type="region of interest" description="Carbamoyl phosphate synthetic domain" evidence="2">
    <location>
        <begin position="554"/>
        <end position="936"/>
    </location>
</feature>
<feature type="region of interest" description="Allosteric domain" evidence="2">
    <location>
        <begin position="937"/>
        <end position="1073"/>
    </location>
</feature>
<feature type="binding site" evidence="2">
    <location>
        <position position="129"/>
    </location>
    <ligand>
        <name>ATP</name>
        <dbReference type="ChEBI" id="CHEBI:30616"/>
        <label>1</label>
    </ligand>
</feature>
<feature type="binding site" evidence="2">
    <location>
        <position position="169"/>
    </location>
    <ligand>
        <name>ATP</name>
        <dbReference type="ChEBI" id="CHEBI:30616"/>
        <label>1</label>
    </ligand>
</feature>
<feature type="binding site" evidence="2">
    <location>
        <position position="175"/>
    </location>
    <ligand>
        <name>ATP</name>
        <dbReference type="ChEBI" id="CHEBI:30616"/>
        <label>1</label>
    </ligand>
</feature>
<feature type="binding site" evidence="2">
    <location>
        <position position="176"/>
    </location>
    <ligand>
        <name>ATP</name>
        <dbReference type="ChEBI" id="CHEBI:30616"/>
        <label>1</label>
    </ligand>
</feature>
<feature type="binding site" evidence="2">
    <location>
        <position position="208"/>
    </location>
    <ligand>
        <name>ATP</name>
        <dbReference type="ChEBI" id="CHEBI:30616"/>
        <label>1</label>
    </ligand>
</feature>
<feature type="binding site" evidence="2">
    <location>
        <position position="210"/>
    </location>
    <ligand>
        <name>ATP</name>
        <dbReference type="ChEBI" id="CHEBI:30616"/>
        <label>1</label>
    </ligand>
</feature>
<feature type="binding site" evidence="2">
    <location>
        <position position="215"/>
    </location>
    <ligand>
        <name>ATP</name>
        <dbReference type="ChEBI" id="CHEBI:30616"/>
        <label>1</label>
    </ligand>
</feature>
<feature type="binding site" evidence="2">
    <location>
        <position position="241"/>
    </location>
    <ligand>
        <name>ATP</name>
        <dbReference type="ChEBI" id="CHEBI:30616"/>
        <label>1</label>
    </ligand>
</feature>
<feature type="binding site" evidence="2">
    <location>
        <position position="242"/>
    </location>
    <ligand>
        <name>ATP</name>
        <dbReference type="ChEBI" id="CHEBI:30616"/>
        <label>1</label>
    </ligand>
</feature>
<feature type="binding site" evidence="2">
    <location>
        <position position="243"/>
    </location>
    <ligand>
        <name>ATP</name>
        <dbReference type="ChEBI" id="CHEBI:30616"/>
        <label>1</label>
    </ligand>
</feature>
<feature type="binding site" evidence="2">
    <location>
        <position position="285"/>
    </location>
    <ligand>
        <name>ATP</name>
        <dbReference type="ChEBI" id="CHEBI:30616"/>
        <label>1</label>
    </ligand>
</feature>
<feature type="binding site" evidence="2">
    <location>
        <position position="285"/>
    </location>
    <ligand>
        <name>Mg(2+)</name>
        <dbReference type="ChEBI" id="CHEBI:18420"/>
        <label>1</label>
    </ligand>
</feature>
<feature type="binding site" evidence="2">
    <location>
        <position position="285"/>
    </location>
    <ligand>
        <name>Mn(2+)</name>
        <dbReference type="ChEBI" id="CHEBI:29035"/>
        <label>1</label>
    </ligand>
</feature>
<feature type="binding site" evidence="2">
    <location>
        <position position="299"/>
    </location>
    <ligand>
        <name>ATP</name>
        <dbReference type="ChEBI" id="CHEBI:30616"/>
        <label>1</label>
    </ligand>
</feature>
<feature type="binding site" evidence="2">
    <location>
        <position position="299"/>
    </location>
    <ligand>
        <name>Mg(2+)</name>
        <dbReference type="ChEBI" id="CHEBI:18420"/>
        <label>1</label>
    </ligand>
</feature>
<feature type="binding site" evidence="2">
    <location>
        <position position="299"/>
    </location>
    <ligand>
        <name>Mg(2+)</name>
        <dbReference type="ChEBI" id="CHEBI:18420"/>
        <label>2</label>
    </ligand>
</feature>
<feature type="binding site" evidence="2">
    <location>
        <position position="299"/>
    </location>
    <ligand>
        <name>Mn(2+)</name>
        <dbReference type="ChEBI" id="CHEBI:29035"/>
        <label>1</label>
    </ligand>
</feature>
<feature type="binding site" evidence="2">
    <location>
        <position position="299"/>
    </location>
    <ligand>
        <name>Mn(2+)</name>
        <dbReference type="ChEBI" id="CHEBI:29035"/>
        <label>2</label>
    </ligand>
</feature>
<feature type="binding site" evidence="2">
    <location>
        <position position="301"/>
    </location>
    <ligand>
        <name>Mg(2+)</name>
        <dbReference type="ChEBI" id="CHEBI:18420"/>
        <label>2</label>
    </ligand>
</feature>
<feature type="binding site" evidence="2">
    <location>
        <position position="301"/>
    </location>
    <ligand>
        <name>Mn(2+)</name>
        <dbReference type="ChEBI" id="CHEBI:29035"/>
        <label>2</label>
    </ligand>
</feature>
<feature type="binding site" evidence="2">
    <location>
        <position position="715"/>
    </location>
    <ligand>
        <name>ATP</name>
        <dbReference type="ChEBI" id="CHEBI:30616"/>
        <label>2</label>
    </ligand>
</feature>
<feature type="binding site" evidence="2">
    <location>
        <position position="754"/>
    </location>
    <ligand>
        <name>ATP</name>
        <dbReference type="ChEBI" id="CHEBI:30616"/>
        <label>2</label>
    </ligand>
</feature>
<feature type="binding site" evidence="2">
    <location>
        <position position="756"/>
    </location>
    <ligand>
        <name>ATP</name>
        <dbReference type="ChEBI" id="CHEBI:30616"/>
        <label>2</label>
    </ligand>
</feature>
<feature type="binding site" evidence="2">
    <location>
        <position position="761"/>
    </location>
    <ligand>
        <name>ATP</name>
        <dbReference type="ChEBI" id="CHEBI:30616"/>
        <label>2</label>
    </ligand>
</feature>
<feature type="binding site" evidence="2">
    <location>
        <position position="786"/>
    </location>
    <ligand>
        <name>ATP</name>
        <dbReference type="ChEBI" id="CHEBI:30616"/>
        <label>2</label>
    </ligand>
</feature>
<feature type="binding site" evidence="2">
    <location>
        <position position="787"/>
    </location>
    <ligand>
        <name>ATP</name>
        <dbReference type="ChEBI" id="CHEBI:30616"/>
        <label>2</label>
    </ligand>
</feature>
<feature type="binding site" evidence="2">
    <location>
        <position position="788"/>
    </location>
    <ligand>
        <name>ATP</name>
        <dbReference type="ChEBI" id="CHEBI:30616"/>
        <label>2</label>
    </ligand>
</feature>
<feature type="binding site" evidence="2">
    <location>
        <position position="789"/>
    </location>
    <ligand>
        <name>ATP</name>
        <dbReference type="ChEBI" id="CHEBI:30616"/>
        <label>2</label>
    </ligand>
</feature>
<feature type="binding site" evidence="2">
    <location>
        <position position="829"/>
    </location>
    <ligand>
        <name>ATP</name>
        <dbReference type="ChEBI" id="CHEBI:30616"/>
        <label>2</label>
    </ligand>
</feature>
<feature type="binding site" evidence="2">
    <location>
        <position position="829"/>
    </location>
    <ligand>
        <name>Mg(2+)</name>
        <dbReference type="ChEBI" id="CHEBI:18420"/>
        <label>3</label>
    </ligand>
</feature>
<feature type="binding site" evidence="2">
    <location>
        <position position="829"/>
    </location>
    <ligand>
        <name>Mn(2+)</name>
        <dbReference type="ChEBI" id="CHEBI:29035"/>
        <label>3</label>
    </ligand>
</feature>
<feature type="binding site" evidence="2">
    <location>
        <position position="841"/>
    </location>
    <ligand>
        <name>ATP</name>
        <dbReference type="ChEBI" id="CHEBI:30616"/>
        <label>2</label>
    </ligand>
</feature>
<feature type="binding site" evidence="2">
    <location>
        <position position="841"/>
    </location>
    <ligand>
        <name>Mg(2+)</name>
        <dbReference type="ChEBI" id="CHEBI:18420"/>
        <label>3</label>
    </ligand>
</feature>
<feature type="binding site" evidence="2">
    <location>
        <position position="841"/>
    </location>
    <ligand>
        <name>Mg(2+)</name>
        <dbReference type="ChEBI" id="CHEBI:18420"/>
        <label>4</label>
    </ligand>
</feature>
<feature type="binding site" evidence="2">
    <location>
        <position position="841"/>
    </location>
    <ligand>
        <name>Mn(2+)</name>
        <dbReference type="ChEBI" id="CHEBI:29035"/>
        <label>3</label>
    </ligand>
</feature>
<feature type="binding site" evidence="2">
    <location>
        <position position="841"/>
    </location>
    <ligand>
        <name>Mn(2+)</name>
        <dbReference type="ChEBI" id="CHEBI:29035"/>
        <label>4</label>
    </ligand>
</feature>
<feature type="binding site" evidence="2">
    <location>
        <position position="843"/>
    </location>
    <ligand>
        <name>Mg(2+)</name>
        <dbReference type="ChEBI" id="CHEBI:18420"/>
        <label>4</label>
    </ligand>
</feature>
<feature type="binding site" evidence="2">
    <location>
        <position position="843"/>
    </location>
    <ligand>
        <name>Mn(2+)</name>
        <dbReference type="ChEBI" id="CHEBI:29035"/>
        <label>4</label>
    </ligand>
</feature>
<comment type="function">
    <text evidence="2">Large subunit of the glutamine-dependent carbamoyl phosphate synthetase (CPSase). CPSase catalyzes the formation of carbamoyl phosphate from the ammonia moiety of glutamine, carbonate, and phosphate donated by ATP, constituting the first step of 2 biosynthetic pathways, one leading to arginine and/or urea and the other to pyrimidine nucleotides. The large subunit (synthetase) binds the substrates ammonia (free or transferred from glutamine from the small subunit), hydrogencarbonate and ATP and carries out an ATP-coupled ligase reaction, activating hydrogencarbonate by forming carboxy phosphate which reacts with ammonia to form carbamoyl phosphate.</text>
</comment>
<comment type="catalytic activity">
    <reaction evidence="2">
        <text>hydrogencarbonate + L-glutamine + 2 ATP + H2O = carbamoyl phosphate + L-glutamate + 2 ADP + phosphate + 2 H(+)</text>
        <dbReference type="Rhea" id="RHEA:18633"/>
        <dbReference type="ChEBI" id="CHEBI:15377"/>
        <dbReference type="ChEBI" id="CHEBI:15378"/>
        <dbReference type="ChEBI" id="CHEBI:17544"/>
        <dbReference type="ChEBI" id="CHEBI:29985"/>
        <dbReference type="ChEBI" id="CHEBI:30616"/>
        <dbReference type="ChEBI" id="CHEBI:43474"/>
        <dbReference type="ChEBI" id="CHEBI:58228"/>
        <dbReference type="ChEBI" id="CHEBI:58359"/>
        <dbReference type="ChEBI" id="CHEBI:456216"/>
        <dbReference type="EC" id="6.3.5.5"/>
    </reaction>
</comment>
<comment type="catalytic activity">
    <molecule>Carbamoyl phosphate synthase large chain</molecule>
    <reaction evidence="2">
        <text>hydrogencarbonate + NH4(+) + 2 ATP = carbamoyl phosphate + 2 ADP + phosphate + 2 H(+)</text>
        <dbReference type="Rhea" id="RHEA:18029"/>
        <dbReference type="ChEBI" id="CHEBI:15378"/>
        <dbReference type="ChEBI" id="CHEBI:17544"/>
        <dbReference type="ChEBI" id="CHEBI:28938"/>
        <dbReference type="ChEBI" id="CHEBI:30616"/>
        <dbReference type="ChEBI" id="CHEBI:43474"/>
        <dbReference type="ChEBI" id="CHEBI:58228"/>
        <dbReference type="ChEBI" id="CHEBI:456216"/>
        <dbReference type="EC" id="6.3.4.16"/>
    </reaction>
</comment>
<comment type="cofactor">
    <cofactor evidence="2">
        <name>Mg(2+)</name>
        <dbReference type="ChEBI" id="CHEBI:18420"/>
    </cofactor>
    <cofactor evidence="2">
        <name>Mn(2+)</name>
        <dbReference type="ChEBI" id="CHEBI:29035"/>
    </cofactor>
    <text evidence="2">Binds 4 Mg(2+) or Mn(2+) ions per subunit.</text>
</comment>
<comment type="pathway">
    <text evidence="2">Amino-acid biosynthesis; L-arginine biosynthesis; carbamoyl phosphate from bicarbonate: step 1/1.</text>
</comment>
<comment type="pathway">
    <text evidence="2">Pyrimidine metabolism; UMP biosynthesis via de novo pathway; (S)-dihydroorotate from bicarbonate: step 1/3.</text>
</comment>
<comment type="subunit">
    <text evidence="2">Composed of two chains; the small (or glutamine) chain promotes the hydrolysis of glutamine to ammonia, which is used by the large (or ammonia) chain to synthesize carbamoyl phosphate. Tetramer of heterodimers (alpha,beta)4.</text>
</comment>
<comment type="domain">
    <text evidence="2">The large subunit is composed of 2 ATP-grasp domains that are involved in binding the 2 ATP molecules needed for carbamoyl phosphate synthesis. The N-terminal ATP-grasp domain (referred to as the carboxyphosphate synthetic component) catalyzes the ATP-dependent phosphorylation of hydrogencarbonate to carboxyphosphate and the subsequent nucleophilic attack by ammonia to form a carbamate intermediate. The C-terminal ATP-grasp domain (referred to as the carbamoyl phosphate synthetic component) then catalyzes the phosphorylation of carbamate with the second ATP to form the end product carbamoyl phosphate. The reactive and unstable enzyme intermediates are sequentially channeled from one active site to the next through the interior of the protein over a distance of at least 96 A.</text>
</comment>
<comment type="similarity">
    <text evidence="2 3">Belongs to the CarB family.</text>
</comment>
<name>CARB_ECOL6</name>